<reference key="1">
    <citation type="journal article" date="2015" name="Proc. Natl. Acad. Sci. U.S.A.">
        <title>Trichodesmium genome maintains abundant, widespread noncoding DNA in situ, despite oligotrophic lifestyle.</title>
        <authorList>
            <person name="Walworth N."/>
            <person name="Pfreundt U."/>
            <person name="Nelson W.C."/>
            <person name="Mincer T."/>
            <person name="Heidelberg J.F."/>
            <person name="Fu F."/>
            <person name="Waterbury J.B."/>
            <person name="Glavina del Rio T."/>
            <person name="Goodwin L."/>
            <person name="Kyrpides N.C."/>
            <person name="Land M.L."/>
            <person name="Woyke T."/>
            <person name="Hutchins D.A."/>
            <person name="Hess W.R."/>
            <person name="Webb E.A."/>
        </authorList>
    </citation>
    <scope>NUCLEOTIDE SEQUENCE [LARGE SCALE GENOMIC DNA]</scope>
    <source>
        <strain>IMS101</strain>
    </source>
</reference>
<evidence type="ECO:0000255" key="1">
    <source>
        <dbReference type="HAMAP-Rule" id="MF_01445"/>
    </source>
</evidence>
<name>TSAD_TRIEI</name>
<protein>
    <recommendedName>
        <fullName evidence="1">tRNA N6-adenosine threonylcarbamoyltransferase</fullName>
        <ecNumber evidence="1">2.3.1.234</ecNumber>
    </recommendedName>
    <alternativeName>
        <fullName evidence="1">N6-L-threonylcarbamoyladenine synthase</fullName>
        <shortName evidence="1">t(6)A synthase</shortName>
    </alternativeName>
    <alternativeName>
        <fullName evidence="1">t(6)A37 threonylcarbamoyladenosine biosynthesis protein TsaD</fullName>
    </alternativeName>
    <alternativeName>
        <fullName evidence="1">tRNA threonylcarbamoyladenosine biosynthesis protein TsaD</fullName>
    </alternativeName>
</protein>
<gene>
    <name evidence="1" type="primary">tsaD</name>
    <name type="synonym">gcp</name>
    <name type="ordered locus">Tery_1635</name>
</gene>
<feature type="chain" id="PRO_0000303602" description="tRNA N6-adenosine threonylcarbamoyltransferase">
    <location>
        <begin position="1"/>
        <end position="325"/>
    </location>
</feature>
<feature type="binding site" evidence="1">
    <location>
        <position position="111"/>
    </location>
    <ligand>
        <name>Fe cation</name>
        <dbReference type="ChEBI" id="CHEBI:24875"/>
    </ligand>
</feature>
<feature type="binding site" evidence="1">
    <location>
        <position position="115"/>
    </location>
    <ligand>
        <name>Fe cation</name>
        <dbReference type="ChEBI" id="CHEBI:24875"/>
    </ligand>
</feature>
<feature type="binding site" evidence="1">
    <location>
        <begin position="134"/>
        <end position="138"/>
    </location>
    <ligand>
        <name>substrate</name>
    </ligand>
</feature>
<feature type="binding site" evidence="1">
    <location>
        <position position="167"/>
    </location>
    <ligand>
        <name>substrate</name>
    </ligand>
</feature>
<feature type="binding site" evidence="1">
    <location>
        <position position="180"/>
    </location>
    <ligand>
        <name>substrate</name>
    </ligand>
</feature>
<feature type="binding site" evidence="1">
    <location>
        <position position="184"/>
    </location>
    <ligand>
        <name>substrate</name>
    </ligand>
</feature>
<feature type="binding site" evidence="1">
    <location>
        <position position="284"/>
    </location>
    <ligand>
        <name>substrate</name>
    </ligand>
</feature>
<feature type="binding site" evidence="1">
    <location>
        <position position="312"/>
    </location>
    <ligand>
        <name>Fe cation</name>
        <dbReference type="ChEBI" id="CHEBI:24875"/>
    </ligand>
</feature>
<organism>
    <name type="scientific">Trichodesmium erythraeum (strain IMS101)</name>
    <dbReference type="NCBI Taxonomy" id="203124"/>
    <lineage>
        <taxon>Bacteria</taxon>
        <taxon>Bacillati</taxon>
        <taxon>Cyanobacteriota</taxon>
        <taxon>Cyanophyceae</taxon>
        <taxon>Oscillatoriophycideae</taxon>
        <taxon>Oscillatoriales</taxon>
        <taxon>Microcoleaceae</taxon>
        <taxon>Trichodesmium</taxon>
    </lineage>
</organism>
<dbReference type="EC" id="2.3.1.234" evidence="1"/>
<dbReference type="EMBL" id="CP000393">
    <property type="protein sequence ID" value="ABG50911.1"/>
    <property type="molecule type" value="Genomic_DNA"/>
</dbReference>
<dbReference type="RefSeq" id="WP_011611286.1">
    <property type="nucleotide sequence ID" value="NC_008312.1"/>
</dbReference>
<dbReference type="SMR" id="Q115B3"/>
<dbReference type="STRING" id="203124.Tery_1635"/>
<dbReference type="KEGG" id="ter:Tery_1635"/>
<dbReference type="eggNOG" id="COG0533">
    <property type="taxonomic scope" value="Bacteria"/>
</dbReference>
<dbReference type="HOGENOM" id="CLU_023208_0_2_3"/>
<dbReference type="OrthoDB" id="9806197at2"/>
<dbReference type="GO" id="GO:0005737">
    <property type="term" value="C:cytoplasm"/>
    <property type="evidence" value="ECO:0007669"/>
    <property type="project" value="UniProtKB-SubCell"/>
</dbReference>
<dbReference type="GO" id="GO:0005506">
    <property type="term" value="F:iron ion binding"/>
    <property type="evidence" value="ECO:0007669"/>
    <property type="project" value="UniProtKB-UniRule"/>
</dbReference>
<dbReference type="GO" id="GO:0061711">
    <property type="term" value="F:N(6)-L-threonylcarbamoyladenine synthase activity"/>
    <property type="evidence" value="ECO:0007669"/>
    <property type="project" value="UniProtKB-EC"/>
</dbReference>
<dbReference type="GO" id="GO:0002949">
    <property type="term" value="P:tRNA threonylcarbamoyladenosine modification"/>
    <property type="evidence" value="ECO:0007669"/>
    <property type="project" value="UniProtKB-UniRule"/>
</dbReference>
<dbReference type="CDD" id="cd24133">
    <property type="entry name" value="ASKHA_NBD_TsaD_bac"/>
    <property type="match status" value="1"/>
</dbReference>
<dbReference type="FunFam" id="3.30.420.40:FF:000012">
    <property type="entry name" value="tRNA N6-adenosine threonylcarbamoyltransferase"/>
    <property type="match status" value="1"/>
</dbReference>
<dbReference type="FunFam" id="3.30.420.40:FF:000040">
    <property type="entry name" value="tRNA N6-adenosine threonylcarbamoyltransferase"/>
    <property type="match status" value="1"/>
</dbReference>
<dbReference type="Gene3D" id="3.30.420.40">
    <property type="match status" value="2"/>
</dbReference>
<dbReference type="HAMAP" id="MF_01445">
    <property type="entry name" value="TsaD"/>
    <property type="match status" value="1"/>
</dbReference>
<dbReference type="InterPro" id="IPR043129">
    <property type="entry name" value="ATPase_NBD"/>
</dbReference>
<dbReference type="InterPro" id="IPR000905">
    <property type="entry name" value="Gcp-like_dom"/>
</dbReference>
<dbReference type="InterPro" id="IPR017861">
    <property type="entry name" value="KAE1/TsaD"/>
</dbReference>
<dbReference type="InterPro" id="IPR022450">
    <property type="entry name" value="TsaD"/>
</dbReference>
<dbReference type="NCBIfam" id="TIGR00329">
    <property type="entry name" value="gcp_kae1"/>
    <property type="match status" value="1"/>
</dbReference>
<dbReference type="NCBIfam" id="TIGR03723">
    <property type="entry name" value="T6A_TsaD_YgjD"/>
    <property type="match status" value="1"/>
</dbReference>
<dbReference type="PANTHER" id="PTHR11735">
    <property type="entry name" value="TRNA N6-ADENOSINE THREONYLCARBAMOYLTRANSFERASE"/>
    <property type="match status" value="1"/>
</dbReference>
<dbReference type="PANTHER" id="PTHR11735:SF6">
    <property type="entry name" value="TRNA N6-ADENOSINE THREONYLCARBAMOYLTRANSFERASE, MITOCHONDRIAL"/>
    <property type="match status" value="1"/>
</dbReference>
<dbReference type="Pfam" id="PF00814">
    <property type="entry name" value="TsaD"/>
    <property type="match status" value="1"/>
</dbReference>
<dbReference type="PRINTS" id="PR00789">
    <property type="entry name" value="OSIALOPTASE"/>
</dbReference>
<dbReference type="SUPFAM" id="SSF53067">
    <property type="entry name" value="Actin-like ATPase domain"/>
    <property type="match status" value="2"/>
</dbReference>
<accession>Q115B3</accession>
<sequence>MTTVLAIETSCDETSVAIVKNRQVLSNIVKSQINIHSFYGGVVPEVASRQHLEIINQAIAQAFREANLDWPDIDGIGATCAPGLVGALLVGLTAAKTLAIVHEKPFVGVHHLEGHIYATYLSQPELVPPFLCLLVSGGHTSLIYVKNCGEYETLGQTRDDAAGEAFDKVARLLKLGYPGGPVIDKLAAEGNKLAFSLPEGKISLPGGGYHPYDFSFSGLKTAVLRLVQKIEQEGNELLSGSSVTKDIAASFQETVAKGLTKRAIACALDYSLNTIAIGGGVAANSSLRQHLSRAVESHNLQVLFPSLRFCTDNAAMIGCVRLVGH</sequence>
<comment type="function">
    <text evidence="1">Required for the formation of a threonylcarbamoyl group on adenosine at position 37 (t(6)A37) in tRNAs that read codons beginning with adenine. Is involved in the transfer of the threonylcarbamoyl moiety of threonylcarbamoyl-AMP (TC-AMP) to the N6 group of A37, together with TsaE and TsaB. TsaD likely plays a direct catalytic role in this reaction.</text>
</comment>
<comment type="catalytic activity">
    <reaction evidence="1">
        <text>L-threonylcarbamoyladenylate + adenosine(37) in tRNA = N(6)-L-threonylcarbamoyladenosine(37) in tRNA + AMP + H(+)</text>
        <dbReference type="Rhea" id="RHEA:37059"/>
        <dbReference type="Rhea" id="RHEA-COMP:10162"/>
        <dbReference type="Rhea" id="RHEA-COMP:10163"/>
        <dbReference type="ChEBI" id="CHEBI:15378"/>
        <dbReference type="ChEBI" id="CHEBI:73682"/>
        <dbReference type="ChEBI" id="CHEBI:74411"/>
        <dbReference type="ChEBI" id="CHEBI:74418"/>
        <dbReference type="ChEBI" id="CHEBI:456215"/>
        <dbReference type="EC" id="2.3.1.234"/>
    </reaction>
</comment>
<comment type="cofactor">
    <cofactor evidence="1">
        <name>Fe(2+)</name>
        <dbReference type="ChEBI" id="CHEBI:29033"/>
    </cofactor>
    <text evidence="1">Binds 1 Fe(2+) ion per subunit.</text>
</comment>
<comment type="subcellular location">
    <subcellularLocation>
        <location evidence="1">Cytoplasm</location>
    </subcellularLocation>
</comment>
<comment type="similarity">
    <text evidence="1">Belongs to the KAE1 / TsaD family.</text>
</comment>
<proteinExistence type="inferred from homology"/>
<keyword id="KW-0012">Acyltransferase</keyword>
<keyword id="KW-0963">Cytoplasm</keyword>
<keyword id="KW-0408">Iron</keyword>
<keyword id="KW-0479">Metal-binding</keyword>
<keyword id="KW-0808">Transferase</keyword>
<keyword id="KW-0819">tRNA processing</keyword>